<protein>
    <recommendedName>
        <fullName evidence="7">Beta-amyrin 28-monooxygenase</fullName>
        <ecNumber evidence="3 4">1.14.14.126</ecNumber>
    </recommendedName>
    <alternativeName>
        <fullName evidence="5">Cytochrome P450 716A81</fullName>
        <shortName evidence="6">BvCYP716A81</shortName>
    </alternativeName>
</protein>
<evidence type="ECO:0000250" key="1">
    <source>
        <dbReference type="UniProtKB" id="Q94IP1"/>
    </source>
</evidence>
<evidence type="ECO:0000255" key="2"/>
<evidence type="ECO:0000269" key="3">
    <source>
    </source>
</evidence>
<evidence type="ECO:0000269" key="4">
    <source>
    </source>
</evidence>
<evidence type="ECO:0000303" key="5">
    <source>
    </source>
</evidence>
<evidence type="ECO:0000303" key="6">
    <source>
    </source>
</evidence>
<evidence type="ECO:0000305" key="7"/>
<name>C7A81_BARVU</name>
<proteinExistence type="evidence at protein level"/>
<organism>
    <name type="scientific">Barbarea vulgaris</name>
    <name type="common">Yellow rocket</name>
    <name type="synonym">Erysimum barbarea</name>
    <dbReference type="NCBI Taxonomy" id="50459"/>
    <lineage>
        <taxon>Eukaryota</taxon>
        <taxon>Viridiplantae</taxon>
        <taxon>Streptophyta</taxon>
        <taxon>Embryophyta</taxon>
        <taxon>Tracheophyta</taxon>
        <taxon>Spermatophyta</taxon>
        <taxon>Magnoliopsida</taxon>
        <taxon>eudicotyledons</taxon>
        <taxon>Gunneridae</taxon>
        <taxon>Pentapetalae</taxon>
        <taxon>rosids</taxon>
        <taxon>malvids</taxon>
        <taxon>Brassicales</taxon>
        <taxon>Brassicaceae</taxon>
        <taxon>Cardamineae</taxon>
        <taxon>Barbarea</taxon>
    </lineage>
</organism>
<gene>
    <name evidence="5" type="primary">CYP716A81</name>
</gene>
<feature type="chain" id="PRO_0000452133" description="Beta-amyrin 28-monooxygenase">
    <location>
        <begin position="1"/>
        <end position="475"/>
    </location>
</feature>
<feature type="transmembrane region" description="Helical" evidence="2">
    <location>
        <begin position="2"/>
        <end position="22"/>
    </location>
</feature>
<feature type="binding site" description="axial binding residue" evidence="1">
    <location>
        <position position="422"/>
    </location>
    <ligand>
        <name>heme</name>
        <dbReference type="ChEBI" id="CHEBI:30413"/>
    </ligand>
    <ligandPart>
        <name>Fe</name>
        <dbReference type="ChEBI" id="CHEBI:18248"/>
    </ligandPart>
</feature>
<sequence>MYLTILFLFVSSILLSLMFLLRKHLSHFSYQNLPPGKTGFPLIGESLSFLSEGRQGRPEKFVTDRVRRFISSSTGVFKTHLFGYPTAVMTGASGNKFLFTNENKLVVSWWPDSVKKIFPYTQSTYTDESKKLRILLMQFMKPEALRKYIGVMDEVAQRHFETLWTNQKQLIVYPLSKKLTFSVACRLFLSMDDPERVSKLEDRFNSVVTGIYSVPIDLPGTRFNRSIKASRLLRKEVCAIIGQRREELKAGRASAEQDVLSHMLMSVGETKDEDLANYLIGILIGGHDTAAIATTFIINYLAEYPHVYQRVLQEQKEILKEKKEEERLKWEDIEKMKYSWNVACEVMRLVPPLTGNFREAIDHFTFKGFYIPKGWKLYWSATATHMNPDYFPEPERFEPNRFEGSGPKPYSYIPFGGGPRMCPGREFARLEILVIIHNLVNRFKWEKVFPNENKIVVDPLPKPGNGLPIRIFPHF</sequence>
<accession>A0A0U2U8U5</accession>
<keyword id="KW-0349">Heme</keyword>
<keyword id="KW-0408">Iron</keyword>
<keyword id="KW-0472">Membrane</keyword>
<keyword id="KW-0479">Metal-binding</keyword>
<keyword id="KW-0503">Monooxygenase</keyword>
<keyword id="KW-0560">Oxidoreductase</keyword>
<keyword id="KW-0812">Transmembrane</keyword>
<keyword id="KW-1133">Transmembrane helix</keyword>
<dbReference type="EC" id="1.14.14.126" evidence="3 4"/>
<dbReference type="EMBL" id="KP795925">
    <property type="protein sequence ID" value="ALR73781.1"/>
    <property type="molecule type" value="mRNA"/>
</dbReference>
<dbReference type="SMR" id="A0A0U2U8U5"/>
<dbReference type="GO" id="GO:0016020">
    <property type="term" value="C:membrane"/>
    <property type="evidence" value="ECO:0007669"/>
    <property type="project" value="UniProtKB-SubCell"/>
</dbReference>
<dbReference type="GO" id="GO:0102373">
    <property type="term" value="F:beta-amyrin 28-monooxygenase activity"/>
    <property type="evidence" value="ECO:0007669"/>
    <property type="project" value="UniProtKB-EC"/>
</dbReference>
<dbReference type="GO" id="GO:0020037">
    <property type="term" value="F:heme binding"/>
    <property type="evidence" value="ECO:0007669"/>
    <property type="project" value="InterPro"/>
</dbReference>
<dbReference type="GO" id="GO:0005506">
    <property type="term" value="F:iron ion binding"/>
    <property type="evidence" value="ECO:0007669"/>
    <property type="project" value="InterPro"/>
</dbReference>
<dbReference type="GO" id="GO:0016712">
    <property type="term" value="F:oxidoreductase activity, acting on paired donors, with incorporation or reduction of molecular oxygen, reduced flavin or flavoprotein as one donor, and incorporation of one atom of oxygen"/>
    <property type="evidence" value="ECO:0000314"/>
    <property type="project" value="UniProtKB"/>
</dbReference>
<dbReference type="GO" id="GO:0016134">
    <property type="term" value="P:saponin metabolic process"/>
    <property type="evidence" value="ECO:0000314"/>
    <property type="project" value="UniProtKB"/>
</dbReference>
<dbReference type="GO" id="GO:0016125">
    <property type="term" value="P:sterol metabolic process"/>
    <property type="evidence" value="ECO:0007669"/>
    <property type="project" value="TreeGrafter"/>
</dbReference>
<dbReference type="CDD" id="cd11043">
    <property type="entry name" value="CYP90-like"/>
    <property type="match status" value="1"/>
</dbReference>
<dbReference type="FunFam" id="1.10.630.10:FF:000022">
    <property type="entry name" value="Taxadiene 5-alpha hydroxylase"/>
    <property type="match status" value="1"/>
</dbReference>
<dbReference type="Gene3D" id="1.10.630.10">
    <property type="entry name" value="Cytochrome P450"/>
    <property type="match status" value="1"/>
</dbReference>
<dbReference type="InterPro" id="IPR001128">
    <property type="entry name" value="Cyt_P450"/>
</dbReference>
<dbReference type="InterPro" id="IPR017972">
    <property type="entry name" value="Cyt_P450_CS"/>
</dbReference>
<dbReference type="InterPro" id="IPR002401">
    <property type="entry name" value="Cyt_P450_E_grp-I"/>
</dbReference>
<dbReference type="InterPro" id="IPR036396">
    <property type="entry name" value="Cyt_P450_sf"/>
</dbReference>
<dbReference type="PANTHER" id="PTHR24286">
    <property type="entry name" value="CYTOCHROME P450 26"/>
    <property type="match status" value="1"/>
</dbReference>
<dbReference type="PANTHER" id="PTHR24286:SF349">
    <property type="entry name" value="CYTOCHROME P450 716A1-RELATED"/>
    <property type="match status" value="1"/>
</dbReference>
<dbReference type="Pfam" id="PF00067">
    <property type="entry name" value="p450"/>
    <property type="match status" value="1"/>
</dbReference>
<dbReference type="PRINTS" id="PR00463">
    <property type="entry name" value="EP450I"/>
</dbReference>
<dbReference type="PRINTS" id="PR00385">
    <property type="entry name" value="P450"/>
</dbReference>
<dbReference type="SUPFAM" id="SSF48264">
    <property type="entry name" value="Cytochrome P450"/>
    <property type="match status" value="1"/>
</dbReference>
<dbReference type="PROSITE" id="PS00086">
    <property type="entry name" value="CYTOCHROME_P450"/>
    <property type="match status" value="1"/>
</dbReference>
<reference key="1">
    <citation type="journal article" date="2015" name="Plant J.">
        <title>Identification and genome organization of saponin pathway genes from a wild crucifer, and their use for transient production of saponins in Nicotiana benthamiana.</title>
        <authorList>
            <person name="Khakimov B."/>
            <person name="Kuzina V."/>
            <person name="Erthmann P.O."/>
            <person name="Fukushima E.O."/>
            <person name="Augustin J.M."/>
            <person name="Olsen C.E."/>
            <person name="Scholtalbers J."/>
            <person name="Volpin H."/>
            <person name="Andersen S.B."/>
            <person name="Hauser T.P."/>
            <person name="Muranaka T."/>
            <person name="Bak S."/>
        </authorList>
    </citation>
    <scope>NUCLEOTIDE SEQUENCE [MRNA]</scope>
    <scope>FUNCTION</scope>
    <scope>CATALYTIC ACTIVITY</scope>
</reference>
<reference key="2">
    <citation type="journal article" date="2018" name="Plant Mol. Biol.">
        <title>A tandem array of UDP-glycosyltransferases from the UGT73C subfamily glycosylate sapogenins, forming a spectrum of mono- and bisdesmosidic saponins.</title>
        <authorList>
            <person name="Erthmann P.O."/>
            <person name="Agerbirk N."/>
            <person name="Bak S."/>
        </authorList>
    </citation>
    <scope>FUNCTION</scope>
    <scope>CATALYTIC ACTIVITY</scope>
</reference>
<comment type="function">
    <text evidence="3 4">Catalyzes the oxidation of the methyl group to a carboxyl group at the C-28 position of beta-amyrin to form oleanolate.</text>
</comment>
<comment type="catalytic activity">
    <reaction evidence="3 4">
        <text>beta-amyrin + 3 reduced [NADPH--hemoprotein reductase] + 3 O2 = oleanolate + 3 oxidized [NADPH--hemoprotein reductase] + 4 H2O + 4 H(+)</text>
        <dbReference type="Rhea" id="RHEA:43068"/>
        <dbReference type="Rhea" id="RHEA-COMP:11964"/>
        <dbReference type="Rhea" id="RHEA-COMP:11965"/>
        <dbReference type="ChEBI" id="CHEBI:10352"/>
        <dbReference type="ChEBI" id="CHEBI:15377"/>
        <dbReference type="ChEBI" id="CHEBI:15378"/>
        <dbReference type="ChEBI" id="CHEBI:15379"/>
        <dbReference type="ChEBI" id="CHEBI:57618"/>
        <dbReference type="ChEBI" id="CHEBI:58210"/>
        <dbReference type="ChEBI" id="CHEBI:82828"/>
        <dbReference type="EC" id="1.14.14.126"/>
    </reaction>
    <physiologicalReaction direction="left-to-right" evidence="3 4">
        <dbReference type="Rhea" id="RHEA:43069"/>
    </physiologicalReaction>
</comment>
<comment type="cofactor">
    <cofactor evidence="1">
        <name>heme</name>
        <dbReference type="ChEBI" id="CHEBI:30413"/>
    </cofactor>
</comment>
<comment type="subcellular location">
    <subcellularLocation>
        <location evidence="2">Membrane</location>
        <topology evidence="2">Single-pass membrane protein</topology>
    </subcellularLocation>
</comment>
<comment type="similarity">
    <text evidence="7">Belongs to the cytochrome P450 family.</text>
</comment>